<evidence type="ECO:0000250" key="1"/>
<evidence type="ECO:0000255" key="2">
    <source>
        <dbReference type="PROSITE-ProRule" id="PRU01150"/>
    </source>
</evidence>
<evidence type="ECO:0000256" key="3">
    <source>
        <dbReference type="SAM" id="MobiDB-lite"/>
    </source>
</evidence>
<evidence type="ECO:0000305" key="4"/>
<protein>
    <recommendedName>
        <fullName>Cytochrome c oxidase assembly protein COX19</fullName>
    </recommendedName>
</protein>
<feature type="chain" id="PRO_0000423552" description="Cytochrome c oxidase assembly protein COX19">
    <location>
        <begin position="1"/>
        <end position="101"/>
    </location>
</feature>
<feature type="domain" description="CHCH" evidence="2">
    <location>
        <begin position="29"/>
        <end position="72"/>
    </location>
</feature>
<feature type="region of interest" description="Disordered" evidence="3">
    <location>
        <begin position="1"/>
        <end position="28"/>
    </location>
</feature>
<feature type="region of interest" description="Disordered" evidence="3">
    <location>
        <begin position="81"/>
        <end position="101"/>
    </location>
</feature>
<feature type="short sequence motif" description="Cx9C motif 1" evidence="2">
    <location>
        <begin position="32"/>
        <end position="42"/>
    </location>
</feature>
<feature type="short sequence motif" description="Cx9C motif 2" evidence="2">
    <location>
        <begin position="54"/>
        <end position="64"/>
    </location>
</feature>
<feature type="compositionally biased region" description="Gly residues" evidence="3">
    <location>
        <begin position="1"/>
        <end position="11"/>
    </location>
</feature>
<feature type="disulfide bond" evidence="2">
    <location>
        <begin position="32"/>
        <end position="64"/>
    </location>
</feature>
<feature type="disulfide bond" evidence="2">
    <location>
        <begin position="42"/>
        <end position="54"/>
    </location>
</feature>
<dbReference type="EMBL" id="JH793327">
    <property type="protein sequence ID" value="ELQ44171.1"/>
    <property type="status" value="ALT_SEQ"/>
    <property type="molecule type" value="Genomic_DNA"/>
</dbReference>
<dbReference type="SMR" id="P0CT19"/>
<dbReference type="Proteomes" id="UP000011086">
    <property type="component" value="Unassembled WGS sequence"/>
</dbReference>
<dbReference type="GO" id="GO:0005758">
    <property type="term" value="C:mitochondrial intermembrane space"/>
    <property type="evidence" value="ECO:0007669"/>
    <property type="project" value="UniProtKB-SubCell"/>
</dbReference>
<dbReference type="GO" id="GO:0033617">
    <property type="term" value="P:mitochondrial cytochrome c oxidase assembly"/>
    <property type="evidence" value="ECO:0007669"/>
    <property type="project" value="TreeGrafter"/>
</dbReference>
<dbReference type="InterPro" id="IPR051383">
    <property type="entry name" value="COX19"/>
</dbReference>
<dbReference type="PANTHER" id="PTHR21107">
    <property type="entry name" value="CYTOCHROME C OXIDASE ASSEMBLY PROTEIN COX19"/>
    <property type="match status" value="1"/>
</dbReference>
<dbReference type="PANTHER" id="PTHR21107:SF2">
    <property type="entry name" value="CYTOCHROME C OXIDASE ASSEMBLY PROTEIN COX19"/>
    <property type="match status" value="1"/>
</dbReference>
<dbReference type="PROSITE" id="PS51808">
    <property type="entry name" value="CHCH"/>
    <property type="match status" value="1"/>
</dbReference>
<reference key="1">
    <citation type="journal article" date="2012" name="PLoS Genet.">
        <title>Comparative analysis of the genomes of two field isolates of the rice blast fungus Magnaporthe oryzae.</title>
        <authorList>
            <person name="Xue M."/>
            <person name="Yang J."/>
            <person name="Li Z."/>
            <person name="Hu S."/>
            <person name="Yao N."/>
            <person name="Dean R.A."/>
            <person name="Zhao W."/>
            <person name="Shen M."/>
            <person name="Zhang H."/>
            <person name="Li C."/>
            <person name="Liu L."/>
            <person name="Cao L."/>
            <person name="Xu X."/>
            <person name="Xing Y."/>
            <person name="Hsiang T."/>
            <person name="Zhang Z."/>
            <person name="Xu J.-R."/>
            <person name="Peng Y.-L."/>
        </authorList>
    </citation>
    <scope>NUCLEOTIDE SEQUENCE [LARGE SCALE GENOMIC DNA]</scope>
    <source>
        <strain>Y34</strain>
    </source>
</reference>
<organism>
    <name type="scientific">Pyricularia oryzae (strain Y34)</name>
    <name type="common">Rice blast fungus</name>
    <name type="synonym">Magnaporthe oryzae</name>
    <dbReference type="NCBI Taxonomy" id="1143189"/>
    <lineage>
        <taxon>Eukaryota</taxon>
        <taxon>Fungi</taxon>
        <taxon>Dikarya</taxon>
        <taxon>Ascomycota</taxon>
        <taxon>Pezizomycotina</taxon>
        <taxon>Sordariomycetes</taxon>
        <taxon>Sordariomycetidae</taxon>
        <taxon>Magnaporthales</taxon>
        <taxon>Pyriculariaceae</taxon>
        <taxon>Pyricularia</taxon>
    </lineage>
</organism>
<name>COX19_PYRO3</name>
<keyword id="KW-0963">Cytoplasm</keyword>
<keyword id="KW-1015">Disulfide bond</keyword>
<keyword id="KW-0496">Mitochondrion</keyword>
<gene>
    <name type="primary">COX19</name>
    <name type="ORF">OOU_Y34scaffold00095g16.1</name>
</gene>
<sequence>MSAFGGPGGGQINQKPIPPQRGSFPLDHDGECKHVMTSYLACMKKVRGVNDNECREFAKSYLACRMDHNLMARDEFKNLGFQDVKDSSNKGDPAKKGELRW</sequence>
<proteinExistence type="inferred from homology"/>
<comment type="function">
    <text evidence="1">Required for the assembly of mitochondrial cytochrome c oxidase.</text>
</comment>
<comment type="subcellular location">
    <subcellularLocation>
        <location evidence="1">Cytoplasm</location>
    </subcellularLocation>
    <subcellularLocation>
        <location evidence="1">Mitochondrion intermembrane space</location>
    </subcellularLocation>
</comment>
<comment type="similarity">
    <text evidence="4">Belongs to the COX19 family.</text>
</comment>
<comment type="sequence caution" evidence="4">
    <conflict type="erroneous gene model prediction">
        <sequence resource="EMBL-CDS" id="ELQ44171"/>
    </conflict>
    <text>The predicted gene OOU_Y34scaffold00095g16 has been split into 3 genes: OOU_Y34scaffold00095g16.1, OOU_Y34scaffold00095g16.2 and OOU_Y34scaffold00095g16.3.</text>
</comment>
<accession>P0CT19</accession>
<accession>L7IMP3</accession>